<protein>
    <recommendedName>
        <fullName evidence="1">Glucose-6-phosphate isomerase</fullName>
        <shortName evidence="1">GPI</shortName>
        <ecNumber evidence="1">5.3.1.9</ecNumber>
    </recommendedName>
    <alternativeName>
        <fullName evidence="1">Phosphoglucose isomerase</fullName>
        <shortName evidence="1">PGI</shortName>
    </alternativeName>
    <alternativeName>
        <fullName evidence="1">Phosphohexose isomerase</fullName>
        <shortName evidence="1">PHI</shortName>
    </alternativeName>
</protein>
<keyword id="KW-0963">Cytoplasm</keyword>
<keyword id="KW-0312">Gluconeogenesis</keyword>
<keyword id="KW-0324">Glycolysis</keyword>
<keyword id="KW-0413">Isomerase</keyword>
<evidence type="ECO:0000255" key="1">
    <source>
        <dbReference type="HAMAP-Rule" id="MF_00473"/>
    </source>
</evidence>
<dbReference type="EC" id="5.3.1.9" evidence="1"/>
<dbReference type="EMBL" id="CP000259">
    <property type="protein sequence ID" value="ABF31375.1"/>
    <property type="molecule type" value="Genomic_DNA"/>
</dbReference>
<dbReference type="RefSeq" id="WP_002991205.1">
    <property type="nucleotide sequence ID" value="NC_008021.1"/>
</dbReference>
<dbReference type="SMR" id="Q1JNM4"/>
<dbReference type="KEGG" id="spk:MGAS9429_Spy0187"/>
<dbReference type="HOGENOM" id="CLU_037303_0_1_9"/>
<dbReference type="UniPathway" id="UPA00109">
    <property type="reaction ID" value="UER00181"/>
</dbReference>
<dbReference type="UniPathway" id="UPA00138"/>
<dbReference type="Proteomes" id="UP000002433">
    <property type="component" value="Chromosome"/>
</dbReference>
<dbReference type="GO" id="GO:0005829">
    <property type="term" value="C:cytosol"/>
    <property type="evidence" value="ECO:0007669"/>
    <property type="project" value="TreeGrafter"/>
</dbReference>
<dbReference type="GO" id="GO:0097367">
    <property type="term" value="F:carbohydrate derivative binding"/>
    <property type="evidence" value="ECO:0007669"/>
    <property type="project" value="InterPro"/>
</dbReference>
<dbReference type="GO" id="GO:0004347">
    <property type="term" value="F:glucose-6-phosphate isomerase activity"/>
    <property type="evidence" value="ECO:0007669"/>
    <property type="project" value="UniProtKB-UniRule"/>
</dbReference>
<dbReference type="GO" id="GO:0048029">
    <property type="term" value="F:monosaccharide binding"/>
    <property type="evidence" value="ECO:0007669"/>
    <property type="project" value="TreeGrafter"/>
</dbReference>
<dbReference type="GO" id="GO:0006094">
    <property type="term" value="P:gluconeogenesis"/>
    <property type="evidence" value="ECO:0007669"/>
    <property type="project" value="UniProtKB-UniRule"/>
</dbReference>
<dbReference type="GO" id="GO:0051156">
    <property type="term" value="P:glucose 6-phosphate metabolic process"/>
    <property type="evidence" value="ECO:0007669"/>
    <property type="project" value="TreeGrafter"/>
</dbReference>
<dbReference type="GO" id="GO:0006096">
    <property type="term" value="P:glycolytic process"/>
    <property type="evidence" value="ECO:0007669"/>
    <property type="project" value="UniProtKB-UniRule"/>
</dbReference>
<dbReference type="CDD" id="cd05015">
    <property type="entry name" value="SIS_PGI_1"/>
    <property type="match status" value="1"/>
</dbReference>
<dbReference type="CDD" id="cd05016">
    <property type="entry name" value="SIS_PGI_2"/>
    <property type="match status" value="1"/>
</dbReference>
<dbReference type="FunFam" id="3.40.50.10490:FF:000015">
    <property type="entry name" value="Glucose-6-phosphate isomerase"/>
    <property type="match status" value="1"/>
</dbReference>
<dbReference type="FunFam" id="3.40.50.10490:FF:000016">
    <property type="entry name" value="Glucose-6-phosphate isomerase"/>
    <property type="match status" value="1"/>
</dbReference>
<dbReference type="Gene3D" id="3.40.50.10490">
    <property type="entry name" value="Glucose-6-phosphate isomerase like protein, domain 1"/>
    <property type="match status" value="2"/>
</dbReference>
<dbReference type="HAMAP" id="MF_00473">
    <property type="entry name" value="G6P_isomerase"/>
    <property type="match status" value="1"/>
</dbReference>
<dbReference type="InterPro" id="IPR001672">
    <property type="entry name" value="G6P_Isomerase"/>
</dbReference>
<dbReference type="InterPro" id="IPR018189">
    <property type="entry name" value="Phosphoglucose_isomerase_CS"/>
</dbReference>
<dbReference type="InterPro" id="IPR046348">
    <property type="entry name" value="SIS_dom_sf"/>
</dbReference>
<dbReference type="InterPro" id="IPR035476">
    <property type="entry name" value="SIS_PGI_1"/>
</dbReference>
<dbReference type="InterPro" id="IPR035482">
    <property type="entry name" value="SIS_PGI_2"/>
</dbReference>
<dbReference type="NCBIfam" id="NF010697">
    <property type="entry name" value="PRK14097.1"/>
    <property type="match status" value="1"/>
</dbReference>
<dbReference type="PANTHER" id="PTHR11469">
    <property type="entry name" value="GLUCOSE-6-PHOSPHATE ISOMERASE"/>
    <property type="match status" value="1"/>
</dbReference>
<dbReference type="PANTHER" id="PTHR11469:SF1">
    <property type="entry name" value="GLUCOSE-6-PHOSPHATE ISOMERASE"/>
    <property type="match status" value="1"/>
</dbReference>
<dbReference type="Pfam" id="PF00342">
    <property type="entry name" value="PGI"/>
    <property type="match status" value="1"/>
</dbReference>
<dbReference type="PRINTS" id="PR00662">
    <property type="entry name" value="G6PISOMERASE"/>
</dbReference>
<dbReference type="SUPFAM" id="SSF53697">
    <property type="entry name" value="SIS domain"/>
    <property type="match status" value="1"/>
</dbReference>
<dbReference type="PROSITE" id="PS00765">
    <property type="entry name" value="P_GLUCOSE_ISOMERASE_1"/>
    <property type="match status" value="1"/>
</dbReference>
<dbReference type="PROSITE" id="PS00174">
    <property type="entry name" value="P_GLUCOSE_ISOMERASE_2"/>
    <property type="match status" value="1"/>
</dbReference>
<dbReference type="PROSITE" id="PS51463">
    <property type="entry name" value="P_GLUCOSE_ISOMERASE_3"/>
    <property type="match status" value="1"/>
</dbReference>
<comment type="function">
    <text evidence="1">Catalyzes the reversible isomerization of glucose-6-phosphate to fructose-6-phosphate.</text>
</comment>
<comment type="catalytic activity">
    <reaction evidence="1">
        <text>alpha-D-glucose 6-phosphate = beta-D-fructose 6-phosphate</text>
        <dbReference type="Rhea" id="RHEA:11816"/>
        <dbReference type="ChEBI" id="CHEBI:57634"/>
        <dbReference type="ChEBI" id="CHEBI:58225"/>
        <dbReference type="EC" id="5.3.1.9"/>
    </reaction>
</comment>
<comment type="pathway">
    <text evidence="1">Carbohydrate biosynthesis; gluconeogenesis.</text>
</comment>
<comment type="pathway">
    <text evidence="1">Carbohydrate degradation; glycolysis; D-glyceraldehyde 3-phosphate and glycerone phosphate from D-glucose: step 2/4.</text>
</comment>
<comment type="subcellular location">
    <subcellularLocation>
        <location evidence="1">Cytoplasm</location>
    </subcellularLocation>
</comment>
<comment type="similarity">
    <text evidence="1">Belongs to the GPI family.</text>
</comment>
<organism>
    <name type="scientific">Streptococcus pyogenes serotype M12 (strain MGAS9429)</name>
    <dbReference type="NCBI Taxonomy" id="370551"/>
    <lineage>
        <taxon>Bacteria</taxon>
        <taxon>Bacillati</taxon>
        <taxon>Bacillota</taxon>
        <taxon>Bacilli</taxon>
        <taxon>Lactobacillales</taxon>
        <taxon>Streptococcaceae</taxon>
        <taxon>Streptococcus</taxon>
    </lineage>
</organism>
<reference key="1">
    <citation type="journal article" date="2006" name="Proc. Natl. Acad. Sci. U.S.A.">
        <title>Molecular genetic anatomy of inter- and intraserotype variation in the human bacterial pathogen group A Streptococcus.</title>
        <authorList>
            <person name="Beres S.B."/>
            <person name="Richter E.W."/>
            <person name="Nagiec M.J."/>
            <person name="Sumby P."/>
            <person name="Porcella S.F."/>
            <person name="DeLeo F.R."/>
            <person name="Musser J.M."/>
        </authorList>
    </citation>
    <scope>NUCLEOTIDE SEQUENCE [LARGE SCALE GENOMIC DNA]</scope>
    <source>
        <strain>MGAS9429</strain>
    </source>
</reference>
<gene>
    <name evidence="1" type="primary">pgi</name>
    <name type="ordered locus">MGAS9429_Spy0187</name>
</gene>
<feature type="chain" id="PRO_0000252651" description="Glucose-6-phosphate isomerase">
    <location>
        <begin position="1"/>
        <end position="449"/>
    </location>
</feature>
<feature type="active site" description="Proton donor" evidence="1">
    <location>
        <position position="291"/>
    </location>
</feature>
<feature type="active site" evidence="1">
    <location>
        <position position="312"/>
    </location>
</feature>
<feature type="active site" evidence="1">
    <location>
        <position position="426"/>
    </location>
</feature>
<sequence>MSHITFDYSKVLESFAGQHEIDFLQGQVTEADKLLREGTGPGSDFLGWLDLPENYDKEEFARILTAAEKIKSDSEVLVVIGIGGSYLGAKAAIDFLNHHFANLQTAKERKAPQILYAGNSISSTYLADLVEYVQDKEFSVNVISKSGTTTEPAIAFRVFKELLVKKYGQEEANKRIYATTDKVKGAVKVEADANNWETFVVPDNVGGRFSVLTAVGLLPIAASGADITALMEGANAARKDLSSDKISENIAYQYAAVRNVLYRKGYITEILANYEPSLQYFGEWWKQLAGESEGKDQKGIYPTSANFSTDLHSLGQFIQEGYRNLFETVIRVDKPRKNVIIPELAEDLDGLGYLQGKDVDFVNKKATDGVLLAHTDGGVPNMFVTLPAQDEFTLGYTIYFFELAIAVSGYMNAVNPFDQPGVEAYKRNMFALLGKPGFEALSAELNARL</sequence>
<accession>Q1JNM4</accession>
<proteinExistence type="inferred from homology"/>
<name>G6PI_STRPC</name>